<evidence type="ECO:0000256" key="1">
    <source>
        <dbReference type="SAM" id="MobiDB-lite"/>
    </source>
</evidence>
<evidence type="ECO:0000305" key="2"/>
<dbReference type="EMBL" id="BC121515">
    <property type="protein sequence ID" value="AAI21516.1"/>
    <property type="molecule type" value="mRNA"/>
</dbReference>
<dbReference type="RefSeq" id="NP_001016674.1">
    <property type="nucleotide sequence ID" value="NM_001016674.2"/>
</dbReference>
<dbReference type="FunCoup" id="Q0IIX4">
    <property type="interactions" value="795"/>
</dbReference>
<dbReference type="STRING" id="8364.ENSXETP00000012300"/>
<dbReference type="PaxDb" id="8364-ENSXETP00000034992"/>
<dbReference type="DNASU" id="549428"/>
<dbReference type="GeneID" id="549428"/>
<dbReference type="KEGG" id="xtr:549428"/>
<dbReference type="AGR" id="Xenbase:XB-GENE-5721736"/>
<dbReference type="CTD" id="136747754"/>
<dbReference type="Xenbase" id="XB-GENE-5721736">
    <property type="gene designation" value="c4h11orf58"/>
</dbReference>
<dbReference type="eggNOG" id="ENOG502RXI1">
    <property type="taxonomic scope" value="Eukaryota"/>
</dbReference>
<dbReference type="HOGENOM" id="CLU_121598_0_0_1"/>
<dbReference type="InParanoid" id="Q0IIX4"/>
<dbReference type="OMA" id="DIGSSNW"/>
<dbReference type="OrthoDB" id="10066125at2759"/>
<dbReference type="Proteomes" id="UP000008143">
    <property type="component" value="Chromosome 4"/>
</dbReference>
<dbReference type="InterPro" id="IPR026714">
    <property type="entry name" value="SMAP"/>
</dbReference>
<dbReference type="InterPro" id="IPR028124">
    <property type="entry name" value="SMAP_dom"/>
</dbReference>
<dbReference type="PANTHER" id="PTHR22175:SF0">
    <property type="entry name" value="SMALL ACIDIC PROTEIN"/>
    <property type="match status" value="1"/>
</dbReference>
<dbReference type="PANTHER" id="PTHR22175">
    <property type="entry name" value="SMALL ACIDIC PROTEIN-RELATED"/>
    <property type="match status" value="1"/>
</dbReference>
<dbReference type="Pfam" id="PF15477">
    <property type="entry name" value="SMAP"/>
    <property type="match status" value="1"/>
</dbReference>
<gene>
    <name type="primary">smap</name>
</gene>
<feature type="chain" id="PRO_0000263663" description="Small acidic protein">
    <location>
        <begin position="1"/>
        <end position="190"/>
    </location>
</feature>
<feature type="region of interest" description="Disordered" evidence="1">
    <location>
        <begin position="1"/>
        <end position="190"/>
    </location>
</feature>
<feature type="compositionally biased region" description="Basic and acidic residues" evidence="1">
    <location>
        <begin position="49"/>
        <end position="83"/>
    </location>
</feature>
<feature type="compositionally biased region" description="Polar residues" evidence="1">
    <location>
        <begin position="84"/>
        <end position="95"/>
    </location>
</feature>
<feature type="compositionally biased region" description="Acidic residues" evidence="1">
    <location>
        <begin position="129"/>
        <end position="154"/>
    </location>
</feature>
<feature type="compositionally biased region" description="Basic and acidic residues" evidence="1">
    <location>
        <begin position="162"/>
        <end position="178"/>
    </location>
</feature>
<sequence>MSAREEKHQRGSKRPAARREEEAGCGSWEQADLGNEERKQKFLRLMGAGKKEHTGRLVIGDHKSTSHFRSGAEDQKISDELEHQYQQSMDSSLSGRNRRHCGLGFSESETAEEKAPPPPPEHPPKTESESESSSEVSSEEEEEEESDSDSASDDDTAHKRKPTEQSDKDIPDSKDPKSNYKMLFVKSTGS</sequence>
<protein>
    <recommendedName>
        <fullName>Small acidic protein</fullName>
    </recommendedName>
</protein>
<name>SMAP_XENTR</name>
<organism>
    <name type="scientific">Xenopus tropicalis</name>
    <name type="common">Western clawed frog</name>
    <name type="synonym">Silurana tropicalis</name>
    <dbReference type="NCBI Taxonomy" id="8364"/>
    <lineage>
        <taxon>Eukaryota</taxon>
        <taxon>Metazoa</taxon>
        <taxon>Chordata</taxon>
        <taxon>Craniata</taxon>
        <taxon>Vertebrata</taxon>
        <taxon>Euteleostomi</taxon>
        <taxon>Amphibia</taxon>
        <taxon>Batrachia</taxon>
        <taxon>Anura</taxon>
        <taxon>Pipoidea</taxon>
        <taxon>Pipidae</taxon>
        <taxon>Xenopodinae</taxon>
        <taxon>Xenopus</taxon>
        <taxon>Silurana</taxon>
    </lineage>
</organism>
<keyword id="KW-1185">Reference proteome</keyword>
<reference key="1">
    <citation type="submission" date="2006-08" db="EMBL/GenBank/DDBJ databases">
        <authorList>
            <consortium name="NIH - Xenopus Gene Collection (XGC) project"/>
        </authorList>
    </citation>
    <scope>NUCLEOTIDE SEQUENCE [LARGE SCALE MRNA]</scope>
    <source>
        <strain>N6</strain>
        <tissue>Oviduct</tissue>
    </source>
</reference>
<comment type="similarity">
    <text evidence="2">Belongs to the SMAP family.</text>
</comment>
<proteinExistence type="evidence at transcript level"/>
<accession>Q0IIX4</accession>